<organism>
    <name type="scientific">Streptococcus pneumoniae (strain 70585)</name>
    <dbReference type="NCBI Taxonomy" id="488221"/>
    <lineage>
        <taxon>Bacteria</taxon>
        <taxon>Bacillati</taxon>
        <taxon>Bacillota</taxon>
        <taxon>Bacilli</taxon>
        <taxon>Lactobacillales</taxon>
        <taxon>Streptococcaceae</taxon>
        <taxon>Streptococcus</taxon>
    </lineage>
</organism>
<sequence>MKVIFLADVKGKGKKGEIKEVPTGYAQNFLIKKNLAKEATAQAVGELRGKQKSEEKAHAEMIAEGKAIKAQLEAEETVVEFVEKVGPDGRTFGSITNKKIAEELQKQFGIKIDKRHIQVQAPIRAVGLIDVPVKIYQDITSVINLRVKEG</sequence>
<evidence type="ECO:0000255" key="1">
    <source>
        <dbReference type="HAMAP-Rule" id="MF_00503"/>
    </source>
</evidence>
<evidence type="ECO:0000305" key="2"/>
<gene>
    <name evidence="1" type="primary">rplI</name>
    <name type="ordered locus">SP70585_2331</name>
</gene>
<feature type="chain" id="PRO_1000196266" description="Large ribosomal subunit protein bL9">
    <location>
        <begin position="1"/>
        <end position="150"/>
    </location>
</feature>
<dbReference type="EMBL" id="CP000918">
    <property type="protein sequence ID" value="ACO16788.1"/>
    <property type="molecule type" value="Genomic_DNA"/>
</dbReference>
<dbReference type="RefSeq" id="WP_000864220.1">
    <property type="nucleotide sequence ID" value="NC_012468.1"/>
</dbReference>
<dbReference type="SMR" id="C1CBI1"/>
<dbReference type="GeneID" id="45652575"/>
<dbReference type="KEGG" id="snm:SP70585_2331"/>
<dbReference type="HOGENOM" id="CLU_078938_3_2_9"/>
<dbReference type="Proteomes" id="UP000002211">
    <property type="component" value="Chromosome"/>
</dbReference>
<dbReference type="GO" id="GO:1990904">
    <property type="term" value="C:ribonucleoprotein complex"/>
    <property type="evidence" value="ECO:0007669"/>
    <property type="project" value="UniProtKB-KW"/>
</dbReference>
<dbReference type="GO" id="GO:0005840">
    <property type="term" value="C:ribosome"/>
    <property type="evidence" value="ECO:0007669"/>
    <property type="project" value="UniProtKB-KW"/>
</dbReference>
<dbReference type="GO" id="GO:0019843">
    <property type="term" value="F:rRNA binding"/>
    <property type="evidence" value="ECO:0007669"/>
    <property type="project" value="UniProtKB-UniRule"/>
</dbReference>
<dbReference type="GO" id="GO:0003735">
    <property type="term" value="F:structural constituent of ribosome"/>
    <property type="evidence" value="ECO:0007669"/>
    <property type="project" value="InterPro"/>
</dbReference>
<dbReference type="GO" id="GO:0006412">
    <property type="term" value="P:translation"/>
    <property type="evidence" value="ECO:0007669"/>
    <property type="project" value="UniProtKB-UniRule"/>
</dbReference>
<dbReference type="FunFam" id="3.10.430.100:FF:000009">
    <property type="entry name" value="50S ribosomal protein L9"/>
    <property type="match status" value="1"/>
</dbReference>
<dbReference type="FunFam" id="3.40.5.10:FF:000002">
    <property type="entry name" value="50S ribosomal protein L9"/>
    <property type="match status" value="1"/>
</dbReference>
<dbReference type="Gene3D" id="3.10.430.100">
    <property type="entry name" value="Ribosomal protein L9, C-terminal domain"/>
    <property type="match status" value="1"/>
</dbReference>
<dbReference type="Gene3D" id="3.40.5.10">
    <property type="entry name" value="Ribosomal protein L9, N-terminal domain"/>
    <property type="match status" value="1"/>
</dbReference>
<dbReference type="HAMAP" id="MF_00503">
    <property type="entry name" value="Ribosomal_bL9"/>
    <property type="match status" value="1"/>
</dbReference>
<dbReference type="InterPro" id="IPR000244">
    <property type="entry name" value="Ribosomal_bL9"/>
</dbReference>
<dbReference type="InterPro" id="IPR009027">
    <property type="entry name" value="Ribosomal_bL9/RNase_H1_N"/>
</dbReference>
<dbReference type="InterPro" id="IPR020594">
    <property type="entry name" value="Ribosomal_bL9_bac/chp"/>
</dbReference>
<dbReference type="InterPro" id="IPR020069">
    <property type="entry name" value="Ribosomal_bL9_C"/>
</dbReference>
<dbReference type="InterPro" id="IPR036791">
    <property type="entry name" value="Ribosomal_bL9_C_sf"/>
</dbReference>
<dbReference type="InterPro" id="IPR020070">
    <property type="entry name" value="Ribosomal_bL9_N"/>
</dbReference>
<dbReference type="InterPro" id="IPR036935">
    <property type="entry name" value="Ribosomal_bL9_N_sf"/>
</dbReference>
<dbReference type="NCBIfam" id="TIGR00158">
    <property type="entry name" value="L9"/>
    <property type="match status" value="1"/>
</dbReference>
<dbReference type="PANTHER" id="PTHR21368">
    <property type="entry name" value="50S RIBOSOMAL PROTEIN L9"/>
    <property type="match status" value="1"/>
</dbReference>
<dbReference type="Pfam" id="PF03948">
    <property type="entry name" value="Ribosomal_L9_C"/>
    <property type="match status" value="1"/>
</dbReference>
<dbReference type="Pfam" id="PF01281">
    <property type="entry name" value="Ribosomal_L9_N"/>
    <property type="match status" value="1"/>
</dbReference>
<dbReference type="SUPFAM" id="SSF55658">
    <property type="entry name" value="L9 N-domain-like"/>
    <property type="match status" value="1"/>
</dbReference>
<dbReference type="SUPFAM" id="SSF55653">
    <property type="entry name" value="Ribosomal protein L9 C-domain"/>
    <property type="match status" value="1"/>
</dbReference>
<dbReference type="PROSITE" id="PS00651">
    <property type="entry name" value="RIBOSOMAL_L9"/>
    <property type="match status" value="1"/>
</dbReference>
<reference key="1">
    <citation type="journal article" date="2010" name="Genome Biol.">
        <title>Structure and dynamics of the pan-genome of Streptococcus pneumoniae and closely related species.</title>
        <authorList>
            <person name="Donati C."/>
            <person name="Hiller N.L."/>
            <person name="Tettelin H."/>
            <person name="Muzzi A."/>
            <person name="Croucher N.J."/>
            <person name="Angiuoli S.V."/>
            <person name="Oggioni M."/>
            <person name="Dunning Hotopp J.C."/>
            <person name="Hu F.Z."/>
            <person name="Riley D.R."/>
            <person name="Covacci A."/>
            <person name="Mitchell T.J."/>
            <person name="Bentley S.D."/>
            <person name="Kilian M."/>
            <person name="Ehrlich G.D."/>
            <person name="Rappuoli R."/>
            <person name="Moxon E.R."/>
            <person name="Masignani V."/>
        </authorList>
    </citation>
    <scope>NUCLEOTIDE SEQUENCE [LARGE SCALE GENOMIC DNA]</scope>
    <source>
        <strain>70585</strain>
    </source>
</reference>
<protein>
    <recommendedName>
        <fullName evidence="1">Large ribosomal subunit protein bL9</fullName>
    </recommendedName>
    <alternativeName>
        <fullName evidence="2">50S ribosomal protein L9</fullName>
    </alternativeName>
</protein>
<comment type="function">
    <text evidence="1">Binds to the 23S rRNA.</text>
</comment>
<comment type="similarity">
    <text evidence="1">Belongs to the bacterial ribosomal protein bL9 family.</text>
</comment>
<name>RL9_STRP7</name>
<proteinExistence type="inferred from homology"/>
<keyword id="KW-0687">Ribonucleoprotein</keyword>
<keyword id="KW-0689">Ribosomal protein</keyword>
<keyword id="KW-0694">RNA-binding</keyword>
<keyword id="KW-0699">rRNA-binding</keyword>
<accession>C1CBI1</accession>